<keyword id="KW-0150">Chloroplast</keyword>
<keyword id="KW-0934">Plastid</keyword>
<keyword id="KW-0687">Ribonucleoprotein</keyword>
<keyword id="KW-0689">Ribosomal protein</keyword>
<keyword id="KW-0694">RNA-binding</keyword>
<keyword id="KW-0699">rRNA-binding</keyword>
<organism>
    <name type="scientific">Oryza sativa</name>
    <name type="common">Rice</name>
    <dbReference type="NCBI Taxonomy" id="4530"/>
    <lineage>
        <taxon>Eukaryota</taxon>
        <taxon>Viridiplantae</taxon>
        <taxon>Streptophyta</taxon>
        <taxon>Embryophyta</taxon>
        <taxon>Tracheophyta</taxon>
        <taxon>Spermatophyta</taxon>
        <taxon>Magnoliopsida</taxon>
        <taxon>Liliopsida</taxon>
        <taxon>Poales</taxon>
        <taxon>Poaceae</taxon>
        <taxon>BOP clade</taxon>
        <taxon>Oryzoideae</taxon>
        <taxon>Oryzeae</taxon>
        <taxon>Oryzinae</taxon>
        <taxon>Oryza</taxon>
    </lineage>
</organism>
<accession>P0C483</accession>
<accession>P12146</accession>
<accession>Q6QXY4</accession>
<accession>Q6QY47</accession>
<dbReference type="EMBL" id="AY522331">
    <property type="protein sequence ID" value="AAS46210.1"/>
    <property type="molecule type" value="Genomic_DNA"/>
</dbReference>
<dbReference type="RefSeq" id="NP_039424.1">
    <property type="nucleotide sequence ID" value="NC_001320.1"/>
</dbReference>
<dbReference type="RefSeq" id="YP_009305342.1">
    <property type="nucleotide sequence ID" value="NC_031333.1"/>
</dbReference>
<dbReference type="SMR" id="P0C483"/>
<dbReference type="GeneID" id="29141410"/>
<dbReference type="GeneID" id="3131443"/>
<dbReference type="KEGG" id="osa:3131443"/>
<dbReference type="GO" id="GO:0009507">
    <property type="term" value="C:chloroplast"/>
    <property type="evidence" value="ECO:0007669"/>
    <property type="project" value="UniProtKB-SubCell"/>
</dbReference>
<dbReference type="GO" id="GO:0022627">
    <property type="term" value="C:cytosolic small ribosomal subunit"/>
    <property type="evidence" value="ECO:0007669"/>
    <property type="project" value="TreeGrafter"/>
</dbReference>
<dbReference type="GO" id="GO:0009536">
    <property type="term" value="C:plastid"/>
    <property type="evidence" value="ECO:0000305"/>
    <property type="project" value="Gramene"/>
</dbReference>
<dbReference type="GO" id="GO:0019843">
    <property type="term" value="F:rRNA binding"/>
    <property type="evidence" value="ECO:0007669"/>
    <property type="project" value="UniProtKB-KW"/>
</dbReference>
<dbReference type="GO" id="GO:0003735">
    <property type="term" value="F:structural constituent of ribosome"/>
    <property type="evidence" value="ECO:0007669"/>
    <property type="project" value="InterPro"/>
</dbReference>
<dbReference type="GO" id="GO:0006412">
    <property type="term" value="P:translation"/>
    <property type="evidence" value="ECO:0007669"/>
    <property type="project" value="UniProtKB-UniRule"/>
</dbReference>
<dbReference type="CDD" id="cd02412">
    <property type="entry name" value="KH-II_30S_S3"/>
    <property type="match status" value="1"/>
</dbReference>
<dbReference type="FunFam" id="3.30.1140.32:FF:000003">
    <property type="entry name" value="30S ribosomal protein S3, chloroplastic"/>
    <property type="match status" value="1"/>
</dbReference>
<dbReference type="FunFam" id="3.30.300.20:FF:000008">
    <property type="entry name" value="30S ribosomal protein S3, chloroplastic"/>
    <property type="match status" value="1"/>
</dbReference>
<dbReference type="Gene3D" id="3.30.300.20">
    <property type="match status" value="1"/>
</dbReference>
<dbReference type="Gene3D" id="3.30.1140.32">
    <property type="entry name" value="Ribosomal protein S3, C-terminal domain"/>
    <property type="match status" value="1"/>
</dbReference>
<dbReference type="HAMAP" id="MF_01309_B">
    <property type="entry name" value="Ribosomal_uS3_B"/>
    <property type="match status" value="1"/>
</dbReference>
<dbReference type="InterPro" id="IPR015946">
    <property type="entry name" value="KH_dom-like_a/b"/>
</dbReference>
<dbReference type="InterPro" id="IPR009019">
    <property type="entry name" value="KH_sf_prok-type"/>
</dbReference>
<dbReference type="InterPro" id="IPR036419">
    <property type="entry name" value="Ribosomal_S3_C_sf"/>
</dbReference>
<dbReference type="InterPro" id="IPR005704">
    <property type="entry name" value="Ribosomal_uS3_bac-typ"/>
</dbReference>
<dbReference type="InterPro" id="IPR001351">
    <property type="entry name" value="Ribosomal_uS3_C"/>
</dbReference>
<dbReference type="InterPro" id="IPR018280">
    <property type="entry name" value="Ribosomal_uS3_CS"/>
</dbReference>
<dbReference type="NCBIfam" id="TIGR01009">
    <property type="entry name" value="rpsC_bact"/>
    <property type="match status" value="1"/>
</dbReference>
<dbReference type="PANTHER" id="PTHR11760">
    <property type="entry name" value="30S/40S RIBOSOMAL PROTEIN S3"/>
    <property type="match status" value="1"/>
</dbReference>
<dbReference type="PANTHER" id="PTHR11760:SF42">
    <property type="entry name" value="SMALL RIBOSOMAL SUBUNIT PROTEIN US3C"/>
    <property type="match status" value="1"/>
</dbReference>
<dbReference type="Pfam" id="PF00189">
    <property type="entry name" value="Ribosomal_S3_C"/>
    <property type="match status" value="1"/>
</dbReference>
<dbReference type="SUPFAM" id="SSF54814">
    <property type="entry name" value="Prokaryotic type KH domain (KH-domain type II)"/>
    <property type="match status" value="1"/>
</dbReference>
<dbReference type="SUPFAM" id="SSF54821">
    <property type="entry name" value="Ribosomal protein S3 C-terminal domain"/>
    <property type="match status" value="1"/>
</dbReference>
<dbReference type="PROSITE" id="PS00548">
    <property type="entry name" value="RIBOSOMAL_S3"/>
    <property type="match status" value="1"/>
</dbReference>
<protein>
    <recommendedName>
        <fullName evidence="2">Small ribosomal subunit protein uS3c</fullName>
    </recommendedName>
    <alternativeName>
        <fullName>30S ribosomal protein S3, chloroplastic</fullName>
    </alternativeName>
</protein>
<comment type="subunit">
    <text evidence="1">Part of the 30S ribosomal subunit.</text>
</comment>
<comment type="subcellular location">
    <subcellularLocation>
        <location>Plastid</location>
        <location>Chloroplast</location>
    </subcellularLocation>
</comment>
<comment type="similarity">
    <text evidence="2">Belongs to the universal ribosomal protein uS3 family.</text>
</comment>
<name>RR3_ORYSA</name>
<gene>
    <name type="primary">rps3</name>
    <name type="ORF">PA116</name>
</gene>
<geneLocation type="chloroplast"/>
<proteinExistence type="inferred from homology"/>
<sequence length="239" mass="27518">MGQKINPLGFRLGTTQNHHSFWFAQPKNYSEGLQEDKKIRNCIKNYIQKNRKKGSNRKIEADSSFEVITHNKKMDSGSSSEVITHIEIQKEIDTIHVIIHIGFPNLLKKKGAIEELEKDLQKEVNSVNQRLNIGIEKVKEPYRQPNILAEYIAFQLKNRVSFRKAMKKAIELTKKTDIKGVKVKIAGRLAGKEIARAECIKKGRLPLQTIRAKIDYCCYPIRTIYGVLGVKIWIFVDEE</sequence>
<reference key="1">
    <citation type="journal article" date="2004" name="Plant Physiol.">
        <title>A comparison of rice chloroplast genomes.</title>
        <authorList>
            <person name="Tang J."/>
            <person name="Xia H."/>
            <person name="Cao M."/>
            <person name="Zhang X."/>
            <person name="Zeng W."/>
            <person name="Hu S."/>
            <person name="Tong W."/>
            <person name="Wang J."/>
            <person name="Wang J."/>
            <person name="Yu J."/>
            <person name="Yang H."/>
            <person name="Zhu L."/>
        </authorList>
    </citation>
    <scope>NUCLEOTIDE SEQUENCE [LARGE SCALE GENOMIC DNA]</scope>
    <source>
        <strain>cv. PA64s</strain>
    </source>
</reference>
<feature type="chain" id="PRO_0000130295" description="Small ribosomal subunit protein uS3c">
    <location>
        <begin position="1"/>
        <end position="239"/>
    </location>
</feature>
<feature type="domain" description="KH type-2">
    <location>
        <begin position="43"/>
        <end position="139"/>
    </location>
</feature>
<evidence type="ECO:0000250" key="1"/>
<evidence type="ECO:0000305" key="2"/>